<evidence type="ECO:0000255" key="1">
    <source>
        <dbReference type="HAMAP-Rule" id="MF_01818"/>
    </source>
</evidence>
<feature type="chain" id="PRO_0000155926" description="Ribonuclease Z">
    <location>
        <begin position="1"/>
        <end position="305"/>
    </location>
</feature>
<feature type="active site" description="Proton acceptor" evidence="1">
    <location>
        <position position="65"/>
    </location>
</feature>
<feature type="binding site" evidence="1">
    <location>
        <position position="61"/>
    </location>
    <ligand>
        <name>Zn(2+)</name>
        <dbReference type="ChEBI" id="CHEBI:29105"/>
        <label>1</label>
        <note>catalytic</note>
    </ligand>
</feature>
<feature type="binding site" evidence="1">
    <location>
        <position position="63"/>
    </location>
    <ligand>
        <name>Zn(2+)</name>
        <dbReference type="ChEBI" id="CHEBI:29105"/>
        <label>1</label>
        <note>catalytic</note>
    </ligand>
</feature>
<feature type="binding site" evidence="1">
    <location>
        <position position="65"/>
    </location>
    <ligand>
        <name>Zn(2+)</name>
        <dbReference type="ChEBI" id="CHEBI:29105"/>
        <label>2</label>
        <note>catalytic</note>
    </ligand>
</feature>
<feature type="binding site" evidence="1">
    <location>
        <position position="66"/>
    </location>
    <ligand>
        <name>Zn(2+)</name>
        <dbReference type="ChEBI" id="CHEBI:29105"/>
        <label>2</label>
        <note>catalytic</note>
    </ligand>
</feature>
<feature type="binding site" evidence="1">
    <location>
        <position position="138"/>
    </location>
    <ligand>
        <name>Zn(2+)</name>
        <dbReference type="ChEBI" id="CHEBI:29105"/>
        <label>1</label>
        <note>catalytic</note>
    </ligand>
</feature>
<feature type="binding site" evidence="1">
    <location>
        <position position="208"/>
    </location>
    <ligand>
        <name>Zn(2+)</name>
        <dbReference type="ChEBI" id="CHEBI:29105"/>
        <label>1</label>
        <note>catalytic</note>
    </ligand>
</feature>
<feature type="binding site" evidence="1">
    <location>
        <position position="208"/>
    </location>
    <ligand>
        <name>Zn(2+)</name>
        <dbReference type="ChEBI" id="CHEBI:29105"/>
        <label>2</label>
        <note>catalytic</note>
    </ligand>
</feature>
<feature type="binding site" evidence="1">
    <location>
        <position position="266"/>
    </location>
    <ligand>
        <name>Zn(2+)</name>
        <dbReference type="ChEBI" id="CHEBI:29105"/>
        <label>2</label>
        <note>catalytic</note>
    </ligand>
</feature>
<organism>
    <name type="scientific">Methanosarcina mazei (strain ATCC BAA-159 / DSM 3647 / Goe1 / Go1 / JCM 11833 / OCM 88)</name>
    <name type="common">Methanosarcina frisia</name>
    <dbReference type="NCBI Taxonomy" id="192952"/>
    <lineage>
        <taxon>Archaea</taxon>
        <taxon>Methanobacteriati</taxon>
        <taxon>Methanobacteriota</taxon>
        <taxon>Stenosarchaea group</taxon>
        <taxon>Methanomicrobia</taxon>
        <taxon>Methanosarcinales</taxon>
        <taxon>Methanosarcinaceae</taxon>
        <taxon>Methanosarcina</taxon>
    </lineage>
</organism>
<protein>
    <recommendedName>
        <fullName evidence="1">Ribonuclease Z</fullName>
        <shortName evidence="1">RNase Z</shortName>
        <ecNumber evidence="1">3.1.26.11</ecNumber>
    </recommendedName>
    <alternativeName>
        <fullName evidence="1">tRNA 3 endonuclease</fullName>
    </alternativeName>
    <alternativeName>
        <fullName evidence="1">tRNase Z</fullName>
    </alternativeName>
</protein>
<proteinExistence type="inferred from homology"/>
<dbReference type="EC" id="3.1.26.11" evidence="1"/>
<dbReference type="EMBL" id="AE008384">
    <property type="protein sequence ID" value="AAM30002.1"/>
    <property type="molecule type" value="Genomic_DNA"/>
</dbReference>
<dbReference type="RefSeq" id="WP_011032260.1">
    <property type="nucleotide sequence ID" value="NC_003901.1"/>
</dbReference>
<dbReference type="SMR" id="Q8Q032"/>
<dbReference type="GeneID" id="82159309"/>
<dbReference type="KEGG" id="mma:MM_0306"/>
<dbReference type="PATRIC" id="fig|192952.21.peg.377"/>
<dbReference type="eggNOG" id="arCOG00501">
    <property type="taxonomic scope" value="Archaea"/>
</dbReference>
<dbReference type="HOGENOM" id="CLU_031317_2_1_2"/>
<dbReference type="Proteomes" id="UP000000595">
    <property type="component" value="Chromosome"/>
</dbReference>
<dbReference type="GO" id="GO:0042781">
    <property type="term" value="F:3'-tRNA processing endoribonuclease activity"/>
    <property type="evidence" value="ECO:0007669"/>
    <property type="project" value="UniProtKB-UniRule"/>
</dbReference>
<dbReference type="GO" id="GO:0008270">
    <property type="term" value="F:zinc ion binding"/>
    <property type="evidence" value="ECO:0007669"/>
    <property type="project" value="UniProtKB-UniRule"/>
</dbReference>
<dbReference type="CDD" id="cd07717">
    <property type="entry name" value="RNaseZ_ZiPD-like_MBL-fold"/>
    <property type="match status" value="1"/>
</dbReference>
<dbReference type="FunFam" id="3.60.15.10:FF:000002">
    <property type="entry name" value="Ribonuclease Z"/>
    <property type="match status" value="1"/>
</dbReference>
<dbReference type="Gene3D" id="3.60.15.10">
    <property type="entry name" value="Ribonuclease Z/Hydroxyacylglutathione hydrolase-like"/>
    <property type="match status" value="1"/>
</dbReference>
<dbReference type="HAMAP" id="MF_01818">
    <property type="entry name" value="RNase_Z_BN"/>
    <property type="match status" value="1"/>
</dbReference>
<dbReference type="InterPro" id="IPR001279">
    <property type="entry name" value="Metallo-B-lactamas"/>
</dbReference>
<dbReference type="InterPro" id="IPR036866">
    <property type="entry name" value="RibonucZ/Hydroxyglut_hydro"/>
</dbReference>
<dbReference type="InterPro" id="IPR013471">
    <property type="entry name" value="RNase_Z/BN"/>
</dbReference>
<dbReference type="NCBIfam" id="NF000801">
    <property type="entry name" value="PRK00055.1-3"/>
    <property type="match status" value="1"/>
</dbReference>
<dbReference type="NCBIfam" id="TIGR02651">
    <property type="entry name" value="RNase_Z"/>
    <property type="match status" value="1"/>
</dbReference>
<dbReference type="PANTHER" id="PTHR46018">
    <property type="entry name" value="ZINC PHOSPHODIESTERASE ELAC PROTEIN 1"/>
    <property type="match status" value="1"/>
</dbReference>
<dbReference type="PANTHER" id="PTHR46018:SF2">
    <property type="entry name" value="ZINC PHOSPHODIESTERASE ELAC PROTEIN 1"/>
    <property type="match status" value="1"/>
</dbReference>
<dbReference type="Pfam" id="PF12706">
    <property type="entry name" value="Lactamase_B_2"/>
    <property type="match status" value="2"/>
</dbReference>
<dbReference type="SMART" id="SM00849">
    <property type="entry name" value="Lactamase_B"/>
    <property type="match status" value="1"/>
</dbReference>
<dbReference type="SUPFAM" id="SSF56281">
    <property type="entry name" value="Metallo-hydrolase/oxidoreductase"/>
    <property type="match status" value="1"/>
</dbReference>
<keyword id="KW-0255">Endonuclease</keyword>
<keyword id="KW-0378">Hydrolase</keyword>
<keyword id="KW-0479">Metal-binding</keyword>
<keyword id="KW-0540">Nuclease</keyword>
<keyword id="KW-0819">tRNA processing</keyword>
<keyword id="KW-0862">Zinc</keyword>
<accession>Q8Q032</accession>
<name>RNZ_METMA</name>
<sequence>MLRIIFLGTGGSLPTRNRNPSAVIVNLKGELLLFDCGEGTQQQMMRAKTGMMSLSSIFVSHFHADHFLGIPGLIQTMSFLGRKEPLTIYGPEGTKEFTEVFKVLGYCNLKYEVRGVELSPGDIVEGKNYVVRALKTEHSTPSLGYSLIENPRPGRFNREKAVELGVLPGPLFAKLQKGNPVEVNGKLVKPEEVVGAPRPGRTVVYSGDTRPCEAVLEASRDADVLIHDGSFADEMAGWAEESMHSTAGEVASLAKEAGVRQLVLTHISSRYTDDVGPILNDSRKVFENVIVAEDLMELEVPYRPD</sequence>
<comment type="function">
    <text evidence="1">Zinc phosphodiesterase, which displays some tRNA 3'-processing endonuclease activity. Probably involved in tRNA maturation, by removing a 3'-trailer from precursor tRNA.</text>
</comment>
<comment type="catalytic activity">
    <reaction evidence="1">
        <text>Endonucleolytic cleavage of RNA, removing extra 3' nucleotides from tRNA precursor, generating 3' termini of tRNAs. A 3'-hydroxy group is left at the tRNA terminus and a 5'-phosphoryl group is left at the trailer molecule.</text>
        <dbReference type="EC" id="3.1.26.11"/>
    </reaction>
</comment>
<comment type="cofactor">
    <cofactor evidence="1">
        <name>Zn(2+)</name>
        <dbReference type="ChEBI" id="CHEBI:29105"/>
    </cofactor>
    <text evidence="1">Binds 2 Zn(2+) ions.</text>
</comment>
<comment type="subunit">
    <text evidence="1">Homodimer.</text>
</comment>
<comment type="similarity">
    <text evidence="1">Belongs to the RNase Z family.</text>
</comment>
<reference key="1">
    <citation type="journal article" date="2002" name="J. Mol. Microbiol. Biotechnol.">
        <title>The genome of Methanosarcina mazei: evidence for lateral gene transfer between Bacteria and Archaea.</title>
        <authorList>
            <person name="Deppenmeier U."/>
            <person name="Johann A."/>
            <person name="Hartsch T."/>
            <person name="Merkl R."/>
            <person name="Schmitz R.A."/>
            <person name="Martinez-Arias R."/>
            <person name="Henne A."/>
            <person name="Wiezer A."/>
            <person name="Baeumer S."/>
            <person name="Jacobi C."/>
            <person name="Brueggemann H."/>
            <person name="Lienard T."/>
            <person name="Christmann A."/>
            <person name="Boemecke M."/>
            <person name="Steckel S."/>
            <person name="Bhattacharyya A."/>
            <person name="Lykidis A."/>
            <person name="Overbeek R."/>
            <person name="Klenk H.-P."/>
            <person name="Gunsalus R.P."/>
            <person name="Fritz H.-J."/>
            <person name="Gottschalk G."/>
        </authorList>
    </citation>
    <scope>NUCLEOTIDE SEQUENCE [LARGE SCALE GENOMIC DNA]</scope>
    <source>
        <strain>ATCC BAA-159 / DSM 3647 / Goe1 / Go1 / JCM 11833 / OCM 88</strain>
    </source>
</reference>
<gene>
    <name evidence="1" type="primary">rnz</name>
    <name type="ordered locus">MM_0306</name>
</gene>